<accession>Q8PY39</accession>
<proteinExistence type="inferred from homology"/>
<organism>
    <name type="scientific">Methanosarcina mazei (strain ATCC BAA-159 / DSM 3647 / Goe1 / Go1 / JCM 11833 / OCM 88)</name>
    <name type="common">Methanosarcina frisia</name>
    <dbReference type="NCBI Taxonomy" id="192952"/>
    <lineage>
        <taxon>Archaea</taxon>
        <taxon>Methanobacteriati</taxon>
        <taxon>Methanobacteriota</taxon>
        <taxon>Stenosarchaea group</taxon>
        <taxon>Methanomicrobia</taxon>
        <taxon>Methanosarcinales</taxon>
        <taxon>Methanosarcinaceae</taxon>
        <taxon>Methanosarcina</taxon>
    </lineage>
</organism>
<gene>
    <name evidence="1" type="primary">thiC2</name>
    <name type="ordered locus">MM_1025</name>
</gene>
<evidence type="ECO:0000255" key="1">
    <source>
        <dbReference type="HAMAP-Rule" id="MF_00089"/>
    </source>
</evidence>
<evidence type="ECO:0000305" key="2"/>
<keyword id="KW-0004">4Fe-4S</keyword>
<keyword id="KW-0408">Iron</keyword>
<keyword id="KW-0411">Iron-sulfur</keyword>
<keyword id="KW-0456">Lyase</keyword>
<keyword id="KW-0479">Metal-binding</keyword>
<keyword id="KW-0949">S-adenosyl-L-methionine</keyword>
<keyword id="KW-0784">Thiamine biosynthesis</keyword>
<keyword id="KW-0862">Zinc</keyword>
<reference key="1">
    <citation type="journal article" date="2002" name="J. Mol. Microbiol. Biotechnol.">
        <title>The genome of Methanosarcina mazei: evidence for lateral gene transfer between Bacteria and Archaea.</title>
        <authorList>
            <person name="Deppenmeier U."/>
            <person name="Johann A."/>
            <person name="Hartsch T."/>
            <person name="Merkl R."/>
            <person name="Schmitz R.A."/>
            <person name="Martinez-Arias R."/>
            <person name="Henne A."/>
            <person name="Wiezer A."/>
            <person name="Baeumer S."/>
            <person name="Jacobi C."/>
            <person name="Brueggemann H."/>
            <person name="Lienard T."/>
            <person name="Christmann A."/>
            <person name="Boemecke M."/>
            <person name="Steckel S."/>
            <person name="Bhattacharyya A."/>
            <person name="Lykidis A."/>
            <person name="Overbeek R."/>
            <person name="Klenk H.-P."/>
            <person name="Gunsalus R.P."/>
            <person name="Fritz H.-J."/>
            <person name="Gottschalk G."/>
        </authorList>
    </citation>
    <scope>NUCLEOTIDE SEQUENCE [LARGE SCALE GENOMIC DNA]</scope>
    <source>
        <strain>ATCC BAA-159 / DSM 3647 / Goe1 / Go1 / JCM 11833 / OCM 88</strain>
    </source>
</reference>
<protein>
    <recommendedName>
        <fullName evidence="1">Phosphomethylpyrimidine synthase 2</fullName>
        <ecNumber evidence="1">4.1.99.17</ecNumber>
    </recommendedName>
    <alternativeName>
        <fullName evidence="1">Hydroxymethylpyrimidine phosphate synthase 2</fullName>
        <shortName evidence="1">HMP-P synthase 2</shortName>
        <shortName evidence="1">HMP-phosphate synthase 2</shortName>
        <shortName evidence="1">HMPP synthase 2</shortName>
    </alternativeName>
    <alternativeName>
        <fullName evidence="1">Thiamine biosynthesis protein ThiC 2</fullName>
    </alternativeName>
</protein>
<sequence>MTIVEDAKKGIITEEMKIVAKDEGLDPEFIRRGIAAGRIVIPTSPYRQVKLCGLGEGLRTKINASIGVSSDIVDDEMEVKKAIAAEKAGADTLMELGTGGDFLGIRKKVIDSISLSVGSVPLYQAFIEAARKYGSIVHMTEDELFKATEDQAKLGTNFMAIHTGVNNITLDRLKAHGRYGGLCSRGGAFMSAWMMHNEKENPLYSQFDYLVEILKEHEVVLSTGNGMRAGATHDATDRAQIQELIINTELGQRAHDAGLQVIIEGPGHIPLDQIETNVKIMKEMSGHKPFYMLGPLATDIAPGYDHIVTAIGASLSASYGCDFLCYVTPAEHLALPNIEDVITGVKTSKIAAHIGDMVKYPERARQWDLDMGRARRDLDWEKMYSLALDPEHARAVRNSRAPEDSDACTMCGNFCALKIVNQNYNLAK</sequence>
<name>THIC2_METMA</name>
<feature type="chain" id="PRO_0000152864" description="Phosphomethylpyrimidine synthase 2">
    <location>
        <begin position="1"/>
        <end position="428"/>
    </location>
</feature>
<feature type="binding site" evidence="1">
    <location>
        <position position="94"/>
    </location>
    <ligand>
        <name>substrate</name>
    </ligand>
</feature>
<feature type="binding site" evidence="1">
    <location>
        <position position="123"/>
    </location>
    <ligand>
        <name>substrate</name>
    </ligand>
</feature>
<feature type="binding site" evidence="1">
    <location>
        <position position="162"/>
    </location>
    <ligand>
        <name>substrate</name>
    </ligand>
</feature>
<feature type="binding site" evidence="1">
    <location>
        <begin position="184"/>
        <end position="186"/>
    </location>
    <ligand>
        <name>substrate</name>
    </ligand>
</feature>
<feature type="binding site" evidence="1">
    <location>
        <begin position="225"/>
        <end position="228"/>
    </location>
    <ligand>
        <name>substrate</name>
    </ligand>
</feature>
<feature type="binding site" evidence="1">
    <location>
        <position position="264"/>
    </location>
    <ligand>
        <name>substrate</name>
    </ligand>
</feature>
<feature type="binding site" evidence="1">
    <location>
        <position position="268"/>
    </location>
    <ligand>
        <name>Zn(2+)</name>
        <dbReference type="ChEBI" id="CHEBI:29105"/>
    </ligand>
</feature>
<feature type="binding site" evidence="1">
    <location>
        <position position="291"/>
    </location>
    <ligand>
        <name>substrate</name>
    </ligand>
</feature>
<feature type="binding site" evidence="1">
    <location>
        <position position="332"/>
    </location>
    <ligand>
        <name>Zn(2+)</name>
        <dbReference type="ChEBI" id="CHEBI:29105"/>
    </ligand>
</feature>
<feature type="binding site" evidence="1">
    <location>
        <position position="408"/>
    </location>
    <ligand>
        <name>[4Fe-4S] cluster</name>
        <dbReference type="ChEBI" id="CHEBI:49883"/>
        <note>4Fe-4S-S-AdoMet</note>
    </ligand>
</feature>
<feature type="binding site" evidence="1">
    <location>
        <position position="411"/>
    </location>
    <ligand>
        <name>[4Fe-4S] cluster</name>
        <dbReference type="ChEBI" id="CHEBI:49883"/>
        <note>4Fe-4S-S-AdoMet</note>
    </ligand>
</feature>
<feature type="binding site" evidence="1">
    <location>
        <position position="415"/>
    </location>
    <ligand>
        <name>[4Fe-4S] cluster</name>
        <dbReference type="ChEBI" id="CHEBI:49883"/>
        <note>4Fe-4S-S-AdoMet</note>
    </ligand>
</feature>
<comment type="function">
    <text evidence="1">Catalyzes the synthesis of the hydroxymethylpyrimidine phosphate (HMP-P) moiety of thiamine from aminoimidazole ribotide (AIR) in a radical S-adenosyl-L-methionine (SAM)-dependent reaction.</text>
</comment>
<comment type="catalytic activity">
    <reaction evidence="1">
        <text>5-amino-1-(5-phospho-beta-D-ribosyl)imidazole + S-adenosyl-L-methionine = 4-amino-2-methyl-5-(phosphooxymethyl)pyrimidine + CO + 5'-deoxyadenosine + formate + L-methionine + 3 H(+)</text>
        <dbReference type="Rhea" id="RHEA:24840"/>
        <dbReference type="ChEBI" id="CHEBI:15378"/>
        <dbReference type="ChEBI" id="CHEBI:15740"/>
        <dbReference type="ChEBI" id="CHEBI:17245"/>
        <dbReference type="ChEBI" id="CHEBI:17319"/>
        <dbReference type="ChEBI" id="CHEBI:57844"/>
        <dbReference type="ChEBI" id="CHEBI:58354"/>
        <dbReference type="ChEBI" id="CHEBI:59789"/>
        <dbReference type="ChEBI" id="CHEBI:137981"/>
        <dbReference type="EC" id="4.1.99.17"/>
    </reaction>
</comment>
<comment type="cofactor">
    <cofactor evidence="1">
        <name>[4Fe-4S] cluster</name>
        <dbReference type="ChEBI" id="CHEBI:49883"/>
    </cofactor>
    <text evidence="1">Binds 1 [4Fe-4S] cluster per subunit. The cluster is coordinated with 3 cysteines and an exchangeable S-adenosyl-L-methionine.</text>
</comment>
<comment type="pathway">
    <text evidence="1">Cofactor biosynthesis; thiamine diphosphate biosynthesis.</text>
</comment>
<comment type="similarity">
    <text evidence="1">Belongs to the ThiC family.</text>
</comment>
<comment type="sequence caution" evidence="2">
    <conflict type="erroneous initiation">
        <sequence resource="EMBL-CDS" id="AAM30721"/>
    </conflict>
</comment>
<dbReference type="EC" id="4.1.99.17" evidence="1"/>
<dbReference type="EMBL" id="AE008384">
    <property type="protein sequence ID" value="AAM30721.1"/>
    <property type="status" value="ALT_INIT"/>
    <property type="molecule type" value="Genomic_DNA"/>
</dbReference>
<dbReference type="SMR" id="Q8PY39"/>
<dbReference type="KEGG" id="mma:MM_1025"/>
<dbReference type="PATRIC" id="fig|192952.21.peg.1201"/>
<dbReference type="eggNOG" id="arCOG02741">
    <property type="taxonomic scope" value="Archaea"/>
</dbReference>
<dbReference type="HOGENOM" id="CLU_013181_2_2_2"/>
<dbReference type="UniPathway" id="UPA00060"/>
<dbReference type="Proteomes" id="UP000000595">
    <property type="component" value="Chromosome"/>
</dbReference>
<dbReference type="GO" id="GO:0051539">
    <property type="term" value="F:4 iron, 4 sulfur cluster binding"/>
    <property type="evidence" value="ECO:0007669"/>
    <property type="project" value="UniProtKB-KW"/>
</dbReference>
<dbReference type="GO" id="GO:0016830">
    <property type="term" value="F:carbon-carbon lyase activity"/>
    <property type="evidence" value="ECO:0007669"/>
    <property type="project" value="InterPro"/>
</dbReference>
<dbReference type="GO" id="GO:0008270">
    <property type="term" value="F:zinc ion binding"/>
    <property type="evidence" value="ECO:0007669"/>
    <property type="project" value="UniProtKB-UniRule"/>
</dbReference>
<dbReference type="GO" id="GO:0009228">
    <property type="term" value="P:thiamine biosynthetic process"/>
    <property type="evidence" value="ECO:0007669"/>
    <property type="project" value="UniProtKB-KW"/>
</dbReference>
<dbReference type="GO" id="GO:0009229">
    <property type="term" value="P:thiamine diphosphate biosynthetic process"/>
    <property type="evidence" value="ECO:0007669"/>
    <property type="project" value="UniProtKB-UniRule"/>
</dbReference>
<dbReference type="Gene3D" id="6.10.250.620">
    <property type="match status" value="1"/>
</dbReference>
<dbReference type="Gene3D" id="3.20.20.540">
    <property type="entry name" value="Radical SAM ThiC family, central domain"/>
    <property type="match status" value="1"/>
</dbReference>
<dbReference type="HAMAP" id="MF_00089">
    <property type="entry name" value="ThiC"/>
    <property type="match status" value="1"/>
</dbReference>
<dbReference type="InterPro" id="IPR037509">
    <property type="entry name" value="ThiC"/>
</dbReference>
<dbReference type="InterPro" id="IPR038521">
    <property type="entry name" value="ThiC/Bza_core_dom"/>
</dbReference>
<dbReference type="InterPro" id="IPR002817">
    <property type="entry name" value="ThiC/BzaA/B"/>
</dbReference>
<dbReference type="NCBIfam" id="NF009895">
    <property type="entry name" value="PRK13352.1"/>
    <property type="match status" value="1"/>
</dbReference>
<dbReference type="NCBIfam" id="TIGR00190">
    <property type="entry name" value="thiC"/>
    <property type="match status" value="1"/>
</dbReference>
<dbReference type="PANTHER" id="PTHR30557:SF1">
    <property type="entry name" value="PHOSPHOMETHYLPYRIMIDINE SYNTHASE, CHLOROPLASTIC"/>
    <property type="match status" value="1"/>
</dbReference>
<dbReference type="PANTHER" id="PTHR30557">
    <property type="entry name" value="THIAMINE BIOSYNTHESIS PROTEIN THIC"/>
    <property type="match status" value="1"/>
</dbReference>
<dbReference type="Pfam" id="PF01964">
    <property type="entry name" value="ThiC_Rad_SAM"/>
    <property type="match status" value="1"/>
</dbReference>
<dbReference type="SFLD" id="SFLDF00407">
    <property type="entry name" value="phosphomethylpyrimidine_syntha"/>
    <property type="match status" value="1"/>
</dbReference>
<dbReference type="SFLD" id="SFLDG01114">
    <property type="entry name" value="phosphomethylpyrimidine_syntha"/>
    <property type="match status" value="1"/>
</dbReference>
<dbReference type="SFLD" id="SFLDS00113">
    <property type="entry name" value="Radical_SAM_Phosphomethylpyrim"/>
    <property type="match status" value="1"/>
</dbReference>